<name>YFMD_SCHPO</name>
<protein>
    <recommendedName>
        <fullName>Probable 6-phosphofructo-2-kinase C222.13c</fullName>
        <ecNumber>2.7.1.105</ecNumber>
    </recommendedName>
</protein>
<comment type="function">
    <text evidence="1">Synthesis of fructose 2,6-bisphosphate.</text>
</comment>
<comment type="catalytic activity">
    <reaction>
        <text>beta-D-fructose 6-phosphate + ATP = beta-D-fructose 2,6-bisphosphate + ADP + H(+)</text>
        <dbReference type="Rhea" id="RHEA:15653"/>
        <dbReference type="ChEBI" id="CHEBI:15378"/>
        <dbReference type="ChEBI" id="CHEBI:30616"/>
        <dbReference type="ChEBI" id="CHEBI:57634"/>
        <dbReference type="ChEBI" id="CHEBI:58579"/>
        <dbReference type="ChEBI" id="CHEBI:456216"/>
        <dbReference type="EC" id="2.7.1.105"/>
    </reaction>
</comment>
<comment type="subcellular location">
    <subcellularLocation>
        <location evidence="4">Cytoplasm</location>
    </subcellularLocation>
    <subcellularLocation>
        <location evidence="4">Nucleus</location>
    </subcellularLocation>
</comment>
<feature type="chain" id="PRO_0000318496" description="Probable 6-phosphofructo-2-kinase C222.13c">
    <location>
        <begin position="1"/>
        <end position="592"/>
    </location>
</feature>
<feature type="region of interest" description="Disordered" evidence="3">
    <location>
        <begin position="1"/>
        <end position="80"/>
    </location>
</feature>
<feature type="compositionally biased region" description="Basic and acidic residues" evidence="3">
    <location>
        <begin position="57"/>
        <end position="66"/>
    </location>
</feature>
<feature type="active site" evidence="2">
    <location>
        <position position="235"/>
    </location>
</feature>
<feature type="active site" evidence="2">
    <location>
        <position position="266"/>
    </location>
</feature>
<feature type="active site" description="Proton donor" evidence="1">
    <location>
        <position position="527"/>
    </location>
</feature>
<feature type="binding site" evidence="2">
    <location>
        <begin position="150"/>
        <end position="157"/>
    </location>
    <ligand>
        <name>ATP</name>
        <dbReference type="ChEBI" id="CHEBI:30616"/>
    </ligand>
</feature>
<feature type="binding site" evidence="1">
    <location>
        <position position="300"/>
    </location>
    <ligand>
        <name>beta-D-fructose 6-phosphate</name>
        <dbReference type="ChEBI" id="CHEBI:57634"/>
    </ligand>
</feature>
<keyword id="KW-0067">ATP-binding</keyword>
<keyword id="KW-0963">Cytoplasm</keyword>
<keyword id="KW-0418">Kinase</keyword>
<keyword id="KW-0547">Nucleotide-binding</keyword>
<keyword id="KW-0539">Nucleus</keyword>
<keyword id="KW-1185">Reference proteome</keyword>
<keyword id="KW-0808">Transferase</keyword>
<dbReference type="EC" id="2.7.1.105"/>
<dbReference type="EMBL" id="CU329670">
    <property type="protein sequence ID" value="CAB60705.1"/>
    <property type="molecule type" value="Genomic_DNA"/>
</dbReference>
<dbReference type="PIR" id="T50154">
    <property type="entry name" value="T50154"/>
</dbReference>
<dbReference type="RefSeq" id="NP_593152.1">
    <property type="nucleotide sequence ID" value="NM_001018549.2"/>
</dbReference>
<dbReference type="SMR" id="Q9UTE1"/>
<dbReference type="BioGRID" id="278435">
    <property type="interactions" value="8"/>
</dbReference>
<dbReference type="FunCoup" id="Q9UTE1">
    <property type="interactions" value="464"/>
</dbReference>
<dbReference type="STRING" id="284812.Q9UTE1"/>
<dbReference type="iPTMnet" id="Q9UTE1"/>
<dbReference type="PaxDb" id="4896-SPAC222.13c.1"/>
<dbReference type="EnsemblFungi" id="SPAC222.13c.1">
    <property type="protein sequence ID" value="SPAC222.13c.1:pep"/>
    <property type="gene ID" value="SPAC222.13c"/>
</dbReference>
<dbReference type="KEGG" id="spo:2541948"/>
<dbReference type="PomBase" id="SPAC222.13c"/>
<dbReference type="VEuPathDB" id="FungiDB:SPAC222.13c"/>
<dbReference type="eggNOG" id="KOG0234">
    <property type="taxonomic scope" value="Eukaryota"/>
</dbReference>
<dbReference type="HOGENOM" id="CLU_006383_3_1_1"/>
<dbReference type="InParanoid" id="Q9UTE1"/>
<dbReference type="OMA" id="CIESDRY"/>
<dbReference type="PhylomeDB" id="Q9UTE1"/>
<dbReference type="PRO" id="PR:Q9UTE1"/>
<dbReference type="Proteomes" id="UP000002485">
    <property type="component" value="Chromosome I"/>
</dbReference>
<dbReference type="GO" id="GO:0005829">
    <property type="term" value="C:cytosol"/>
    <property type="evidence" value="ECO:0007005"/>
    <property type="project" value="PomBase"/>
</dbReference>
<dbReference type="GO" id="GO:0005634">
    <property type="term" value="C:nucleus"/>
    <property type="evidence" value="ECO:0007005"/>
    <property type="project" value="PomBase"/>
</dbReference>
<dbReference type="GO" id="GO:0003873">
    <property type="term" value="F:6-phosphofructo-2-kinase activity"/>
    <property type="evidence" value="ECO:0000318"/>
    <property type="project" value="GO_Central"/>
</dbReference>
<dbReference type="GO" id="GO:0005524">
    <property type="term" value="F:ATP binding"/>
    <property type="evidence" value="ECO:0007669"/>
    <property type="project" value="UniProtKB-KW"/>
</dbReference>
<dbReference type="GO" id="GO:0006003">
    <property type="term" value="P:fructose 2,6-bisphosphate metabolic process"/>
    <property type="evidence" value="ECO:0000318"/>
    <property type="project" value="GO_Central"/>
</dbReference>
<dbReference type="GO" id="GO:0006000">
    <property type="term" value="P:fructose metabolic process"/>
    <property type="evidence" value="ECO:0007669"/>
    <property type="project" value="InterPro"/>
</dbReference>
<dbReference type="CDD" id="cd07067">
    <property type="entry name" value="HP_PGM_like"/>
    <property type="match status" value="1"/>
</dbReference>
<dbReference type="FunFam" id="3.40.50.300:FF:000644">
    <property type="entry name" value="GpmB, Fructose-2,6-bisphosphatase"/>
    <property type="match status" value="1"/>
</dbReference>
<dbReference type="FunFam" id="3.40.50.1240:FF:000114">
    <property type="entry name" value="Probable 6-phosphofructo-2-kinase C222.13c"/>
    <property type="match status" value="1"/>
</dbReference>
<dbReference type="Gene3D" id="3.40.50.300">
    <property type="entry name" value="P-loop containing nucleotide triphosphate hydrolases"/>
    <property type="match status" value="1"/>
</dbReference>
<dbReference type="Gene3D" id="3.40.50.1240">
    <property type="entry name" value="Phosphoglycerate mutase-like"/>
    <property type="match status" value="1"/>
</dbReference>
<dbReference type="InterPro" id="IPR003094">
    <property type="entry name" value="6Pfruct_kin"/>
</dbReference>
<dbReference type="InterPro" id="IPR013079">
    <property type="entry name" value="6Phosfructo_kin"/>
</dbReference>
<dbReference type="InterPro" id="IPR013078">
    <property type="entry name" value="His_Pase_superF_clade-1"/>
</dbReference>
<dbReference type="InterPro" id="IPR029033">
    <property type="entry name" value="His_PPase_superfam"/>
</dbReference>
<dbReference type="InterPro" id="IPR027417">
    <property type="entry name" value="P-loop_NTPase"/>
</dbReference>
<dbReference type="PANTHER" id="PTHR10606:SF77">
    <property type="entry name" value="6-PHOSPHOFRUCTO-2-KINASE C222.13C-RELATED"/>
    <property type="match status" value="1"/>
</dbReference>
<dbReference type="PANTHER" id="PTHR10606">
    <property type="entry name" value="6-PHOSPHOFRUCTO-2-KINASE/FRUCTOSE-2,6-BISPHOSPHATASE"/>
    <property type="match status" value="1"/>
</dbReference>
<dbReference type="Pfam" id="PF01591">
    <property type="entry name" value="6PF2K"/>
    <property type="match status" value="1"/>
</dbReference>
<dbReference type="Pfam" id="PF00300">
    <property type="entry name" value="His_Phos_1"/>
    <property type="match status" value="1"/>
</dbReference>
<dbReference type="PIRSF" id="PIRSF000709">
    <property type="entry name" value="6PFK_2-Ptase"/>
    <property type="match status" value="1"/>
</dbReference>
<dbReference type="PRINTS" id="PR00991">
    <property type="entry name" value="6PFRUCTKNASE"/>
</dbReference>
<dbReference type="SMART" id="SM00855">
    <property type="entry name" value="PGAM"/>
    <property type="match status" value="1"/>
</dbReference>
<dbReference type="SUPFAM" id="SSF52540">
    <property type="entry name" value="P-loop containing nucleoside triphosphate hydrolases"/>
    <property type="match status" value="1"/>
</dbReference>
<dbReference type="SUPFAM" id="SSF53254">
    <property type="entry name" value="Phosphoglycerate mutase-like"/>
    <property type="match status" value="1"/>
</dbReference>
<proteinExistence type="inferred from homology"/>
<gene>
    <name type="ORF">SPAC222.13c</name>
</gene>
<sequence>MSNTGSARTEEFTKGTGYEATKPNNDTDDDAKQNYPSKEPHMKLGDYTEETSFVDDSIFKREELTPDRNSPANDVEKMEVPKPTPQWMKLKDEGKLGKHRKNRLRRPGRFPVRQESTIDIPGLTVSKRTENDSNNASYGIREKLIIILVGIPATGKSYIGSKLSRYYNWLKYNCRFFSVGDKRREEGASTYSMSADFFDIKNEETFKFRENVALETLEDLLHWMIHENGVIGILDATNSTHERRKHLYDRISKEADIGIMFLESLCTDDILFEENIKLKIKGPDYEGYDTESALKDLRERVDLYKKYYEPLDERDEQLPFLQYVKVINVGIKVVTHNIEGFLAGQAVYFMLNLNIQKRQIWLTRPGESLDTVAGRIGGDASLTPIGKQYAQDLANFMDRQRVLWQLRYTNDLASTNKRFSLSEASSFNVWSSVRKRAIETIEFFNPDSYNVKKIRLLNDLNLGSREGLTLREFSEKYPDEFDVIKRKDYAYRFSGQGGESYLDVIHRLQPLIVEIERSSGNILVVSHRIVSNILMTYFLNYHPEDIIDVGLPLHTLFCIESDRYGTTCMAYRYDAANRQFIKDPMFDLRKRT</sequence>
<evidence type="ECO:0000250" key="1"/>
<evidence type="ECO:0000255" key="2"/>
<evidence type="ECO:0000256" key="3">
    <source>
        <dbReference type="SAM" id="MobiDB-lite"/>
    </source>
</evidence>
<evidence type="ECO:0000269" key="4">
    <source>
    </source>
</evidence>
<organism>
    <name type="scientific">Schizosaccharomyces pombe (strain 972 / ATCC 24843)</name>
    <name type="common">Fission yeast</name>
    <dbReference type="NCBI Taxonomy" id="284812"/>
    <lineage>
        <taxon>Eukaryota</taxon>
        <taxon>Fungi</taxon>
        <taxon>Dikarya</taxon>
        <taxon>Ascomycota</taxon>
        <taxon>Taphrinomycotina</taxon>
        <taxon>Schizosaccharomycetes</taxon>
        <taxon>Schizosaccharomycetales</taxon>
        <taxon>Schizosaccharomycetaceae</taxon>
        <taxon>Schizosaccharomyces</taxon>
    </lineage>
</organism>
<reference key="1">
    <citation type="journal article" date="2002" name="Nature">
        <title>The genome sequence of Schizosaccharomyces pombe.</title>
        <authorList>
            <person name="Wood V."/>
            <person name="Gwilliam R."/>
            <person name="Rajandream M.A."/>
            <person name="Lyne M.H."/>
            <person name="Lyne R."/>
            <person name="Stewart A."/>
            <person name="Sgouros J.G."/>
            <person name="Peat N."/>
            <person name="Hayles J."/>
            <person name="Baker S.G."/>
            <person name="Basham D."/>
            <person name="Bowman S."/>
            <person name="Brooks K."/>
            <person name="Brown D."/>
            <person name="Brown S."/>
            <person name="Chillingworth T."/>
            <person name="Churcher C.M."/>
            <person name="Collins M."/>
            <person name="Connor R."/>
            <person name="Cronin A."/>
            <person name="Davis P."/>
            <person name="Feltwell T."/>
            <person name="Fraser A."/>
            <person name="Gentles S."/>
            <person name="Goble A."/>
            <person name="Hamlin N."/>
            <person name="Harris D.E."/>
            <person name="Hidalgo J."/>
            <person name="Hodgson G."/>
            <person name="Holroyd S."/>
            <person name="Hornsby T."/>
            <person name="Howarth S."/>
            <person name="Huckle E.J."/>
            <person name="Hunt S."/>
            <person name="Jagels K."/>
            <person name="James K.D."/>
            <person name="Jones L."/>
            <person name="Jones M."/>
            <person name="Leather S."/>
            <person name="McDonald S."/>
            <person name="McLean J."/>
            <person name="Mooney P."/>
            <person name="Moule S."/>
            <person name="Mungall K.L."/>
            <person name="Murphy L.D."/>
            <person name="Niblett D."/>
            <person name="Odell C."/>
            <person name="Oliver K."/>
            <person name="O'Neil S."/>
            <person name="Pearson D."/>
            <person name="Quail M.A."/>
            <person name="Rabbinowitsch E."/>
            <person name="Rutherford K.M."/>
            <person name="Rutter S."/>
            <person name="Saunders D."/>
            <person name="Seeger K."/>
            <person name="Sharp S."/>
            <person name="Skelton J."/>
            <person name="Simmonds M.N."/>
            <person name="Squares R."/>
            <person name="Squares S."/>
            <person name="Stevens K."/>
            <person name="Taylor K."/>
            <person name="Taylor R.G."/>
            <person name="Tivey A."/>
            <person name="Walsh S.V."/>
            <person name="Warren T."/>
            <person name="Whitehead S."/>
            <person name="Woodward J.R."/>
            <person name="Volckaert G."/>
            <person name="Aert R."/>
            <person name="Robben J."/>
            <person name="Grymonprez B."/>
            <person name="Weltjens I."/>
            <person name="Vanstreels E."/>
            <person name="Rieger M."/>
            <person name="Schaefer M."/>
            <person name="Mueller-Auer S."/>
            <person name="Gabel C."/>
            <person name="Fuchs M."/>
            <person name="Duesterhoeft A."/>
            <person name="Fritzc C."/>
            <person name="Holzer E."/>
            <person name="Moestl D."/>
            <person name="Hilbert H."/>
            <person name="Borzym K."/>
            <person name="Langer I."/>
            <person name="Beck A."/>
            <person name="Lehrach H."/>
            <person name="Reinhardt R."/>
            <person name="Pohl T.M."/>
            <person name="Eger P."/>
            <person name="Zimmermann W."/>
            <person name="Wedler H."/>
            <person name="Wambutt R."/>
            <person name="Purnelle B."/>
            <person name="Goffeau A."/>
            <person name="Cadieu E."/>
            <person name="Dreano S."/>
            <person name="Gloux S."/>
            <person name="Lelaure V."/>
            <person name="Mottier S."/>
            <person name="Galibert F."/>
            <person name="Aves S.J."/>
            <person name="Xiang Z."/>
            <person name="Hunt C."/>
            <person name="Moore K."/>
            <person name="Hurst S.M."/>
            <person name="Lucas M."/>
            <person name="Rochet M."/>
            <person name="Gaillardin C."/>
            <person name="Tallada V.A."/>
            <person name="Garzon A."/>
            <person name="Thode G."/>
            <person name="Daga R.R."/>
            <person name="Cruzado L."/>
            <person name="Jimenez J."/>
            <person name="Sanchez M."/>
            <person name="del Rey F."/>
            <person name="Benito J."/>
            <person name="Dominguez A."/>
            <person name="Revuelta J.L."/>
            <person name="Moreno S."/>
            <person name="Armstrong J."/>
            <person name="Forsburg S.L."/>
            <person name="Cerutti L."/>
            <person name="Lowe T."/>
            <person name="McCombie W.R."/>
            <person name="Paulsen I."/>
            <person name="Potashkin J."/>
            <person name="Shpakovski G.V."/>
            <person name="Ussery D."/>
            <person name="Barrell B.G."/>
            <person name="Nurse P."/>
        </authorList>
    </citation>
    <scope>NUCLEOTIDE SEQUENCE [LARGE SCALE GENOMIC DNA]</scope>
    <source>
        <strain>972 / ATCC 24843</strain>
    </source>
</reference>
<reference key="2">
    <citation type="journal article" date="2006" name="Nat. Biotechnol.">
        <title>ORFeome cloning and global analysis of protein localization in the fission yeast Schizosaccharomyces pombe.</title>
        <authorList>
            <person name="Matsuyama A."/>
            <person name="Arai R."/>
            <person name="Yashiroda Y."/>
            <person name="Shirai A."/>
            <person name="Kamata A."/>
            <person name="Sekido S."/>
            <person name="Kobayashi Y."/>
            <person name="Hashimoto A."/>
            <person name="Hamamoto M."/>
            <person name="Hiraoka Y."/>
            <person name="Horinouchi S."/>
            <person name="Yoshida M."/>
        </authorList>
    </citation>
    <scope>SUBCELLULAR LOCATION [LARGE SCALE ANALYSIS]</scope>
</reference>
<accession>Q9UTE1</accession>